<feature type="chain" id="PRO_0000421124" description="Penicillin-binding protein 1A">
    <location>
        <begin position="1"/>
        <end position="820"/>
    </location>
</feature>
<feature type="transmembrane region" description="Helical" evidence="4">
    <location>
        <begin position="139"/>
        <end position="159"/>
    </location>
</feature>
<feature type="region of interest" description="Disordered" evidence="5">
    <location>
        <begin position="1"/>
        <end position="120"/>
    </location>
</feature>
<feature type="region of interest" description="Transglycosylase">
    <location>
        <begin position="180"/>
        <end position="360"/>
    </location>
</feature>
<feature type="region of interest" description="Transpeptidase">
    <location>
        <begin position="453"/>
        <end position="743"/>
    </location>
</feature>
<feature type="region of interest" description="Disordered" evidence="5">
    <location>
        <begin position="792"/>
        <end position="820"/>
    </location>
</feature>
<feature type="compositionally biased region" description="Basic and acidic residues" evidence="5">
    <location>
        <begin position="41"/>
        <end position="53"/>
    </location>
</feature>
<feature type="compositionally biased region" description="Low complexity" evidence="5">
    <location>
        <begin position="792"/>
        <end position="804"/>
    </location>
</feature>
<feature type="compositionally biased region" description="Pro residues" evidence="5">
    <location>
        <begin position="805"/>
        <end position="820"/>
    </location>
</feature>
<feature type="active site" description="Proton donor; for transglycosylase activity" evidence="3">
    <location>
        <position position="213"/>
    </location>
</feature>
<feature type="active site" description="Acyl-ester intermediate; for transpeptidase activity" evidence="3">
    <location>
        <position position="487"/>
    </location>
</feature>
<feature type="helix" evidence="10">
    <location>
        <begin position="392"/>
        <end position="409"/>
    </location>
</feature>
<feature type="helix" evidence="10">
    <location>
        <begin position="413"/>
        <end position="419"/>
    </location>
</feature>
<feature type="strand" evidence="10">
    <location>
        <begin position="422"/>
        <end position="425"/>
    </location>
</feature>
<feature type="helix" evidence="10">
    <location>
        <begin position="429"/>
        <end position="443"/>
    </location>
</feature>
<feature type="strand" evidence="10">
    <location>
        <begin position="450"/>
        <end position="457"/>
    </location>
</feature>
<feature type="turn" evidence="10">
    <location>
        <begin position="459"/>
        <end position="461"/>
    </location>
</feature>
<feature type="strand" evidence="10">
    <location>
        <begin position="463"/>
        <end position="468"/>
    </location>
</feature>
<feature type="helix" evidence="10">
    <location>
        <begin position="486"/>
        <end position="489"/>
    </location>
</feature>
<feature type="helix" evidence="10">
    <location>
        <begin position="490"/>
        <end position="499"/>
    </location>
</feature>
<feature type="strand" evidence="10">
    <location>
        <begin position="507"/>
        <end position="509"/>
    </location>
</feature>
<feature type="strand" evidence="10">
    <location>
        <begin position="513"/>
        <end position="515"/>
    </location>
</feature>
<feature type="strand" evidence="10">
    <location>
        <begin position="518"/>
        <end position="520"/>
    </location>
</feature>
<feature type="helix" evidence="10">
    <location>
        <begin position="523"/>
        <end position="525"/>
    </location>
</feature>
<feature type="strand" evidence="10">
    <location>
        <begin position="529"/>
        <end position="532"/>
    </location>
</feature>
<feature type="helix" evidence="10">
    <location>
        <begin position="533"/>
        <end position="539"/>
    </location>
</feature>
<feature type="helix" evidence="10">
    <location>
        <begin position="542"/>
        <end position="551"/>
    </location>
</feature>
<feature type="helix" evidence="10">
    <location>
        <begin position="555"/>
        <end position="566"/>
    </location>
</feature>
<feature type="strand" evidence="10">
    <location>
        <begin position="575"/>
        <end position="577"/>
    </location>
</feature>
<feature type="strand" evidence="10">
    <location>
        <begin position="583"/>
        <end position="585"/>
    </location>
</feature>
<feature type="helix" evidence="10">
    <location>
        <begin position="590"/>
        <end position="594"/>
    </location>
</feature>
<feature type="strand" evidence="10">
    <location>
        <begin position="597"/>
        <end position="599"/>
    </location>
</feature>
<feature type="helix" evidence="10">
    <location>
        <begin position="601"/>
        <end position="612"/>
    </location>
</feature>
<feature type="turn" evidence="10">
    <location>
        <begin position="613"/>
        <end position="615"/>
    </location>
</feature>
<feature type="strand" evidence="10">
    <location>
        <begin position="621"/>
        <end position="627"/>
    </location>
</feature>
<feature type="strand" evidence="10">
    <location>
        <begin position="633"/>
        <end position="636"/>
    </location>
</feature>
<feature type="turn" evidence="9">
    <location>
        <begin position="637"/>
        <end position="639"/>
    </location>
</feature>
<feature type="helix" evidence="10">
    <location>
        <begin position="650"/>
        <end position="660"/>
    </location>
</feature>
<feature type="helix" evidence="10">
    <location>
        <begin position="663"/>
        <end position="666"/>
    </location>
</feature>
<feature type="helix" evidence="10">
    <location>
        <begin position="673"/>
        <end position="675"/>
    </location>
</feature>
<feature type="strand" evidence="10">
    <location>
        <begin position="679"/>
        <end position="686"/>
    </location>
</feature>
<feature type="strand" evidence="10">
    <location>
        <begin position="690"/>
        <end position="702"/>
    </location>
</feature>
<feature type="strand" evidence="10">
    <location>
        <begin position="705"/>
        <end position="716"/>
    </location>
</feature>
<feature type="turn" evidence="10">
    <location>
        <begin position="730"/>
        <end position="732"/>
    </location>
</feature>
<feature type="helix" evidence="10">
    <location>
        <begin position="733"/>
        <end position="746"/>
    </location>
</feature>
<feature type="strand" evidence="10">
    <location>
        <begin position="763"/>
        <end position="766"/>
    </location>
</feature>
<reference key="1">
    <citation type="journal article" date="1998" name="Nature">
        <title>Deciphering the biology of Mycobacterium tuberculosis from the complete genome sequence.</title>
        <authorList>
            <person name="Cole S.T."/>
            <person name="Brosch R."/>
            <person name="Parkhill J."/>
            <person name="Garnier T."/>
            <person name="Churcher C.M."/>
            <person name="Harris D.E."/>
            <person name="Gordon S.V."/>
            <person name="Eiglmeier K."/>
            <person name="Gas S."/>
            <person name="Barry C.E. III"/>
            <person name="Tekaia F."/>
            <person name="Badcock K."/>
            <person name="Basham D."/>
            <person name="Brown D."/>
            <person name="Chillingworth T."/>
            <person name="Connor R."/>
            <person name="Davies R.M."/>
            <person name="Devlin K."/>
            <person name="Feltwell T."/>
            <person name="Gentles S."/>
            <person name="Hamlin N."/>
            <person name="Holroyd S."/>
            <person name="Hornsby T."/>
            <person name="Jagels K."/>
            <person name="Krogh A."/>
            <person name="McLean J."/>
            <person name="Moule S."/>
            <person name="Murphy L.D."/>
            <person name="Oliver S."/>
            <person name="Osborne J."/>
            <person name="Quail M.A."/>
            <person name="Rajandream M.A."/>
            <person name="Rogers J."/>
            <person name="Rutter S."/>
            <person name="Seeger K."/>
            <person name="Skelton S."/>
            <person name="Squares S."/>
            <person name="Squares R."/>
            <person name="Sulston J.E."/>
            <person name="Taylor K."/>
            <person name="Whitehead S."/>
            <person name="Barrell B.G."/>
        </authorList>
    </citation>
    <scope>NUCLEOTIDE SEQUENCE [LARGE SCALE GENOMIC DNA]</scope>
    <source>
        <strain>ATCC 25618 / H37Rv</strain>
    </source>
</reference>
<reference key="2">
    <citation type="journal article" date="2022" name="Genomics">
        <title>Deep N-terminomics of Mycobacterium tuberculosis H37Rv extensively correct annotated encoding genes.</title>
        <authorList>
            <person name="Shi J."/>
            <person name="Meng S."/>
            <person name="Wan L."/>
            <person name="Zhang Z."/>
            <person name="Jiang S."/>
            <person name="Zhu H."/>
            <person name="Dai E."/>
            <person name="Chang L."/>
            <person name="Gao H."/>
            <person name="Wan K."/>
            <person name="Zhang L."/>
            <person name="Zhao X."/>
            <person name="Liu H."/>
            <person name="Lyu Z."/>
            <person name="Zhang Y."/>
            <person name="Xu P."/>
        </authorList>
    </citation>
    <scope>PROTEIN SEQUENCE OF 97-114</scope>
    <scope>SEQUENCE REVISION TO N-TERMINUS</scope>
    <source>
        <strain>H37Rv</strain>
    </source>
</reference>
<reference key="3">
    <citation type="journal article" date="2002" name="Biochem. J.">
        <title>Overexpression, purification and biochemical characterization of a class A high-molecular-mass penicillin-binding protein (PBP), PBP1* and its soluble derivative from Mycobacterium tuberculosis.</title>
        <authorList>
            <person name="Bhakta S."/>
            <person name="Basu J."/>
        </authorList>
    </citation>
    <scope>PENICILLIN-BINDING</scope>
    <source>
        <strain>ATCC 25618 / H37Rv</strain>
    </source>
</reference>
<reference key="4">
    <citation type="journal article" date="2010" name="PLoS Pathog.">
        <title>Interaction and modulation of two antagonistic cell wall enzymes of mycobacteria.</title>
        <authorList>
            <person name="Hett E.C."/>
            <person name="Chao M.C."/>
            <person name="Rubin E.J."/>
        </authorList>
    </citation>
    <scope>FUNCTION</scope>
    <scope>INTERACTION WITH RIPA</scope>
    <scope>SUBCELLULAR LOCATION</scope>
    <source>
        <strain>ATCC 25618 / H37Rv</strain>
    </source>
</reference>
<reference key="5">
    <citation type="journal article" date="2011" name="Mol. Cell. Proteomics">
        <title>Proteogenomic analysis of Mycobacterium tuberculosis by high resolution mass spectrometry.</title>
        <authorList>
            <person name="Kelkar D.S."/>
            <person name="Kumar D."/>
            <person name="Kumar P."/>
            <person name="Balakrishnan L."/>
            <person name="Muthusamy B."/>
            <person name="Yadav A.K."/>
            <person name="Shrivastava P."/>
            <person name="Marimuthu A."/>
            <person name="Anand S."/>
            <person name="Sundaram H."/>
            <person name="Kingsbury R."/>
            <person name="Harsha H.C."/>
            <person name="Nair B."/>
            <person name="Prasad T.S."/>
            <person name="Chauhan D.S."/>
            <person name="Katoch K."/>
            <person name="Katoch V.M."/>
            <person name="Kumar P."/>
            <person name="Chaerkady R."/>
            <person name="Ramachandran S."/>
            <person name="Dash D."/>
            <person name="Pandey A."/>
        </authorList>
    </citation>
    <scope>IDENTIFICATION BY MASS SPECTROMETRY [LARGE SCALE ANALYSIS]</scope>
    <source>
        <strain>ATCC 25618 / H37Rv</strain>
    </source>
</reference>
<protein>
    <recommendedName>
        <fullName>Penicillin-binding protein 1A</fullName>
        <shortName>PBP-1A</shortName>
    </recommendedName>
    <alternativeName>
        <fullName>Penicillin-binding protein 1*</fullName>
    </alternativeName>
    <domain>
        <recommendedName>
            <fullName>Penicillin-insensitive transglycosylase</fullName>
            <ecNumber evidence="2">2.4.99.28</ecNumber>
        </recommendedName>
        <alternativeName>
            <fullName>Peptidoglycan TGase</fullName>
        </alternativeName>
    </domain>
    <domain>
        <recommendedName>
            <fullName>Penicillin-sensitive transpeptidase</fullName>
            <ecNumber evidence="2">3.4.16.4</ecNumber>
        </recommendedName>
        <alternativeName>
            <fullName>DD-transpeptidase</fullName>
        </alternativeName>
    </domain>
</protein>
<organism>
    <name type="scientific">Mycobacterium tuberculosis (strain ATCC 25618 / H37Rv)</name>
    <dbReference type="NCBI Taxonomy" id="83332"/>
    <lineage>
        <taxon>Bacteria</taxon>
        <taxon>Bacillati</taxon>
        <taxon>Actinomycetota</taxon>
        <taxon>Actinomycetes</taxon>
        <taxon>Mycobacteriales</taxon>
        <taxon>Mycobacteriaceae</taxon>
        <taxon>Mycobacterium</taxon>
        <taxon>Mycobacterium tuberculosis complex</taxon>
    </lineage>
</organism>
<evidence type="ECO:0000250" key="1"/>
<evidence type="ECO:0000250" key="2">
    <source>
        <dbReference type="UniProtKB" id="P02918"/>
    </source>
</evidence>
<evidence type="ECO:0000250" key="3">
    <source>
        <dbReference type="UniProtKB" id="P02919"/>
    </source>
</evidence>
<evidence type="ECO:0000255" key="4"/>
<evidence type="ECO:0000256" key="5">
    <source>
        <dbReference type="SAM" id="MobiDB-lite"/>
    </source>
</evidence>
<evidence type="ECO:0000269" key="6">
    <source>
    </source>
</evidence>
<evidence type="ECO:0000269" key="7">
    <source>
    </source>
</evidence>
<evidence type="ECO:0000305" key="8"/>
<evidence type="ECO:0007829" key="9">
    <source>
        <dbReference type="PDB" id="5CRF"/>
    </source>
</evidence>
<evidence type="ECO:0007829" key="10">
    <source>
        <dbReference type="PDB" id="5CXW"/>
    </source>
</evidence>
<name>PBP1A_MYCTU</name>
<dbReference type="EC" id="2.4.99.28" evidence="2"/>
<dbReference type="EC" id="3.4.16.4" evidence="2"/>
<dbReference type="EMBL" id="AL123456">
    <property type="protein sequence ID" value="CCP42772.1"/>
    <property type="status" value="ALT_INIT"/>
    <property type="molecule type" value="Genomic_DNA"/>
</dbReference>
<dbReference type="PIR" id="B70913">
    <property type="entry name" value="B70913"/>
</dbReference>
<dbReference type="RefSeq" id="YP_177687.1">
    <property type="nucleotide sequence ID" value="NC_000962.3"/>
</dbReference>
<dbReference type="PDB" id="5CRF">
    <property type="method" value="X-ray"/>
    <property type="resolution" value="1.80 A"/>
    <property type="chains" value="A/B/C/D=391-820"/>
</dbReference>
<dbReference type="PDB" id="5CXW">
    <property type="method" value="X-ray"/>
    <property type="resolution" value="1.75 A"/>
    <property type="chains" value="A=391-820"/>
</dbReference>
<dbReference type="PDBsum" id="5CRF"/>
<dbReference type="PDBsum" id="5CXW"/>
<dbReference type="SMR" id="P71707"/>
<dbReference type="FunCoup" id="P71707">
    <property type="interactions" value="20"/>
</dbReference>
<dbReference type="STRING" id="83332.Rv0050"/>
<dbReference type="CAZy" id="GT51">
    <property type="family name" value="Glycosyltransferase Family 51"/>
</dbReference>
<dbReference type="PaxDb" id="83332-Rv0050"/>
<dbReference type="DNASU" id="887065"/>
<dbReference type="GeneID" id="887065"/>
<dbReference type="KEGG" id="mtu:Rv0050"/>
<dbReference type="PATRIC" id="fig|83332.12.peg.56"/>
<dbReference type="TubercuList" id="Rv0050"/>
<dbReference type="eggNOG" id="COG0744">
    <property type="taxonomic scope" value="Bacteria"/>
</dbReference>
<dbReference type="InParanoid" id="P71707"/>
<dbReference type="OrthoDB" id="9766909at2"/>
<dbReference type="UniPathway" id="UPA00219"/>
<dbReference type="Proteomes" id="UP000001584">
    <property type="component" value="Chromosome"/>
</dbReference>
<dbReference type="GO" id="GO:0030288">
    <property type="term" value="C:outer membrane-bounded periplasmic space"/>
    <property type="evidence" value="ECO:0000314"/>
    <property type="project" value="MTBBASE"/>
</dbReference>
<dbReference type="GO" id="GO:0005886">
    <property type="term" value="C:plasma membrane"/>
    <property type="evidence" value="ECO:0007669"/>
    <property type="project" value="UniProtKB-SubCell"/>
</dbReference>
<dbReference type="GO" id="GO:0008658">
    <property type="term" value="F:penicillin binding"/>
    <property type="evidence" value="ECO:0000314"/>
    <property type="project" value="MTBBASE"/>
</dbReference>
<dbReference type="GO" id="GO:0008955">
    <property type="term" value="F:peptidoglycan glycosyltransferase activity"/>
    <property type="evidence" value="ECO:0000318"/>
    <property type="project" value="GO_Central"/>
</dbReference>
<dbReference type="GO" id="GO:0009002">
    <property type="term" value="F:serine-type D-Ala-D-Ala carboxypeptidase activity"/>
    <property type="evidence" value="ECO:0007669"/>
    <property type="project" value="UniProtKB-EC"/>
</dbReference>
<dbReference type="GO" id="GO:0071555">
    <property type="term" value="P:cell wall organization"/>
    <property type="evidence" value="ECO:0007669"/>
    <property type="project" value="UniProtKB-KW"/>
</dbReference>
<dbReference type="GO" id="GO:0071456">
    <property type="term" value="P:cellular response to hypoxia"/>
    <property type="evidence" value="ECO:0000270"/>
    <property type="project" value="MTBBASE"/>
</dbReference>
<dbReference type="GO" id="GO:0009252">
    <property type="term" value="P:peptidoglycan biosynthetic process"/>
    <property type="evidence" value="ECO:0000318"/>
    <property type="project" value="GO_Central"/>
</dbReference>
<dbReference type="GO" id="GO:0006508">
    <property type="term" value="P:proteolysis"/>
    <property type="evidence" value="ECO:0007669"/>
    <property type="project" value="UniProtKB-KW"/>
</dbReference>
<dbReference type="GO" id="GO:0008360">
    <property type="term" value="P:regulation of cell shape"/>
    <property type="evidence" value="ECO:0007669"/>
    <property type="project" value="UniProtKB-KW"/>
</dbReference>
<dbReference type="FunFam" id="1.10.3810.10:FF:000007">
    <property type="entry name" value="Penicillin-binding protein 1A"/>
    <property type="match status" value="1"/>
</dbReference>
<dbReference type="FunFam" id="3.40.710.10:FF:000100">
    <property type="entry name" value="Penicillin-binding protein 1A"/>
    <property type="match status" value="1"/>
</dbReference>
<dbReference type="Gene3D" id="1.10.3810.10">
    <property type="entry name" value="Biosynthetic peptidoglycan transglycosylase-like"/>
    <property type="match status" value="1"/>
</dbReference>
<dbReference type="Gene3D" id="3.40.710.10">
    <property type="entry name" value="DD-peptidase/beta-lactamase superfamily"/>
    <property type="match status" value="1"/>
</dbReference>
<dbReference type="InterPro" id="IPR012338">
    <property type="entry name" value="Beta-lactam/transpept-like"/>
</dbReference>
<dbReference type="InterPro" id="IPR001264">
    <property type="entry name" value="Glyco_trans_51"/>
</dbReference>
<dbReference type="InterPro" id="IPR050396">
    <property type="entry name" value="Glycosyltr_51/Transpeptidase"/>
</dbReference>
<dbReference type="InterPro" id="IPR023346">
    <property type="entry name" value="Lysozyme-like_dom_sf"/>
</dbReference>
<dbReference type="InterPro" id="IPR036950">
    <property type="entry name" value="PBP_transglycosylase"/>
</dbReference>
<dbReference type="InterPro" id="IPR001460">
    <property type="entry name" value="PCN-bd_Tpept"/>
</dbReference>
<dbReference type="PANTHER" id="PTHR32282">
    <property type="entry name" value="BINDING PROTEIN TRANSPEPTIDASE, PUTATIVE-RELATED"/>
    <property type="match status" value="1"/>
</dbReference>
<dbReference type="PANTHER" id="PTHR32282:SF34">
    <property type="entry name" value="PENICILLIN-BINDING PROTEIN 1A"/>
    <property type="match status" value="1"/>
</dbReference>
<dbReference type="Pfam" id="PF00912">
    <property type="entry name" value="Transgly"/>
    <property type="match status" value="1"/>
</dbReference>
<dbReference type="Pfam" id="PF00905">
    <property type="entry name" value="Transpeptidase"/>
    <property type="match status" value="1"/>
</dbReference>
<dbReference type="SUPFAM" id="SSF56601">
    <property type="entry name" value="beta-lactamase/transpeptidase-like"/>
    <property type="match status" value="1"/>
</dbReference>
<dbReference type="SUPFAM" id="SSF53955">
    <property type="entry name" value="Lysozyme-like"/>
    <property type="match status" value="1"/>
</dbReference>
<sequence>MNSDGRHHQSSSGAPRGPANPGQRGQVPPDDRLTAILPPVTDDRSAPHADSIEAVKAALDGAPPMPPPRDPLEEVTAALAAPPGKPPRGDQLGGRRRPPGPPGPPGSSGQPAGRLPQPRVDLPRVGQINWKWIRRSLYLTAAVVILLPMVTFTMAYLIVDVPKPGDIRTNQVSTILASDGSEIAKIVPPEGNRVDVNLSQVPMHVRQAVIAAEDRNFYSNPGFSFTGFARAVKNNLFGGDLQGGSTITQQYVKNALVGSAQHGWSGLMRKAKELVIATKMSGEWSKDDVLQAYLNIIYFGRGAYGISAASKAYFDKPVEQLTVAEGALLAALIRRPSTLDPAVDPEGAHARWNWVLDGMVETKALSPNDRAAQVFPETVPPDLARAENQTKGPNGLIERQVTRELLELFNIDEQTLNTQGLVVTTTIDPQAQRAAEKAVAKYLDGQDPDMRAAVVSIDPHNGAVRAYYGGDNANGFDFAQAGLQTGSSFKVFALVAALEQGIGLGYQVDSSPLTVDGIKITNVEGEGCGTCNIAEALKMSLNTSYYRLMLKLNGGPQAVADAAHQAGIASSFPGVAHTLSEDGKGGPPNNGIVLGQYQTRVIDMASAYATLAASGIYHPPHFVQKVVSANGQVLFDASTADNTGDQRIPKAVADNVTAAMEPIAGYSRGHNLAGGRDSAAKTGTTQFGDTTANKDAWMVGYTPSLSTAVWVGTVKGDEPLVTASGAAIYGSGLPSDIWKATMDGALKGTSNETFPKPTEVGGYAGVPPPPPPPEVPPSETVIQPTVEIAPGITIPIGPPTTITLAPPPPAPPAATPTPPP</sequence>
<comment type="function">
    <text evidence="1 6">Cell wall formation. Synthesis of cross-linked peptidoglycan from the lipid intermediates. The enzyme has a penicillin-insensitive transglycosylase N-terminal domain (formation of linear glycan strands) and a penicillin-sensitive transpeptidase C-terminal domain (cross-linking of the peptide subunits) (By similarity). Has little peptidoglycan hydrolytic activity; however it inhibits the synergistic peptidoglycan hydrolysis of RipA plus RpfB.</text>
</comment>
<comment type="catalytic activity">
    <reaction evidence="2">
        <text>[GlcNAc-(1-&gt;4)-Mur2Ac(oyl-L-Ala-gamma-D-Glu-L-Lys-D-Ala-D-Ala)](n)-di-trans,octa-cis-undecaprenyl diphosphate + beta-D-GlcNAc-(1-&gt;4)-Mur2Ac(oyl-L-Ala-gamma-D-Glu-L-Lys-D-Ala-D-Ala)-di-trans,octa-cis-undecaprenyl diphosphate = [GlcNAc-(1-&gt;4)-Mur2Ac(oyl-L-Ala-gamma-D-Glu-L-Lys-D-Ala-D-Ala)](n+1)-di-trans,octa-cis-undecaprenyl diphosphate + di-trans,octa-cis-undecaprenyl diphosphate + H(+)</text>
        <dbReference type="Rhea" id="RHEA:23708"/>
        <dbReference type="Rhea" id="RHEA-COMP:9602"/>
        <dbReference type="Rhea" id="RHEA-COMP:9603"/>
        <dbReference type="ChEBI" id="CHEBI:15378"/>
        <dbReference type="ChEBI" id="CHEBI:58405"/>
        <dbReference type="ChEBI" id="CHEBI:60033"/>
        <dbReference type="ChEBI" id="CHEBI:78435"/>
        <dbReference type="EC" id="2.4.99.28"/>
    </reaction>
</comment>
<comment type="catalytic activity">
    <reaction evidence="2">
        <text>Preferential cleavage: (Ac)2-L-Lys-D-Ala-|-D-Ala. Also transpeptidation of peptidyl-alanyl moieties that are N-acyl substituents of D-alanine.</text>
        <dbReference type="EC" id="3.4.16.4"/>
    </reaction>
</comment>
<comment type="pathway">
    <text>Cell wall biogenesis; peptidoglycan biosynthesis.</text>
</comment>
<comment type="subunit">
    <text evidence="6">Interacts with RipA via its transpeptidase domain (residues 561-820).</text>
</comment>
<comment type="subcellular location">
    <subcellularLocation>
        <location evidence="8">Cell membrane</location>
        <topology evidence="8">Single-pass membrane protein</topology>
    </subcellularLocation>
    <text evidence="6">Localizes to poles and occasionally septa upon expression in M.smegmatis.</text>
</comment>
<comment type="domain">
    <text>A penicillin-binding domain is found between residues 420-820.</text>
</comment>
<comment type="similarity">
    <text evidence="8">In the N-terminal section; belongs to the glycosyltransferase 51 family.</text>
</comment>
<comment type="similarity">
    <text evidence="8">In the C-terminal section; belongs to the transpeptidase family.</text>
</comment>
<comment type="sequence caution" evidence="7">
    <conflict type="erroneous initiation">
        <sequence resource="EMBL-CDS" id="CCP42772"/>
    </conflict>
    <text>Truncated N-terminus.</text>
</comment>
<accession>P71707</accession>
<accession>L0T5D2</accession>
<proteinExistence type="evidence at protein level"/>
<gene>
    <name type="primary">ponA1</name>
    <name type="ordered locus">Rv0050</name>
    <name type="ORF">MTCY21D4.13</name>
</gene>
<keyword id="KW-0002">3D-structure</keyword>
<keyword id="KW-0121">Carboxypeptidase</keyword>
<keyword id="KW-1003">Cell membrane</keyword>
<keyword id="KW-0133">Cell shape</keyword>
<keyword id="KW-0961">Cell wall biogenesis/degradation</keyword>
<keyword id="KW-0903">Direct protein sequencing</keyword>
<keyword id="KW-0328">Glycosyltransferase</keyword>
<keyword id="KW-0378">Hydrolase</keyword>
<keyword id="KW-0472">Membrane</keyword>
<keyword id="KW-0511">Multifunctional enzyme</keyword>
<keyword id="KW-0573">Peptidoglycan synthesis</keyword>
<keyword id="KW-0645">Protease</keyword>
<keyword id="KW-1185">Reference proteome</keyword>
<keyword id="KW-0808">Transferase</keyword>
<keyword id="KW-0812">Transmembrane</keyword>
<keyword id="KW-1133">Transmembrane helix</keyword>